<reference evidence="6" key="1">
    <citation type="journal article" date="1998" name="Science">
        <title>Genome sequence of the nematode C. elegans: a platform for investigating biology.</title>
        <authorList>
            <consortium name="The C. elegans sequencing consortium"/>
        </authorList>
    </citation>
    <scope>NUCLEOTIDE SEQUENCE [LARGE SCALE GENOMIC DNA]</scope>
    <source>
        <strain>Bristol N2</strain>
    </source>
</reference>
<reference evidence="4" key="2">
    <citation type="journal article" date="2011" name="Neuron">
        <title>The immunoglobulin super family protein RIG-3 prevents synaptic potentiation and regulates Wnt signaling.</title>
        <authorList>
            <person name="Babu K."/>
            <person name="Hu Z."/>
            <person name="Chien S.C."/>
            <person name="Garriga G."/>
            <person name="Kaplan J.M."/>
        </authorList>
    </citation>
    <scope>FUNCTION</scope>
    <scope>SUBCELLULAR LOCATION</scope>
    <scope>TISSUE SPECIFICITY</scope>
    <scope>DISRUPTION PHENOTYPE</scope>
    <scope>GPI-ANCHOR AT ASP-466</scope>
    <scope>MUTAGENESIS OF 465-MET--ILE-487</scope>
</reference>
<feature type="signal peptide" evidence="1">
    <location>
        <begin position="1"/>
        <end position="23"/>
    </location>
</feature>
<feature type="chain" id="PRO_5004186920" description="Neuronal immunoglobulin domain-containing protein rig-3" evidence="1">
    <location>
        <begin position="24"/>
        <end position="466"/>
    </location>
</feature>
<feature type="propeptide" id="PRO_0000440240" description="Removed in mature form" evidence="5">
    <location>
        <begin position="467"/>
        <end position="487"/>
    </location>
</feature>
<feature type="domain" description="Ig-like 1" evidence="2">
    <location>
        <begin position="34"/>
        <end position="139"/>
    </location>
</feature>
<feature type="domain" description="Ig-like 2" evidence="2">
    <location>
        <begin position="247"/>
        <end position="354"/>
    </location>
</feature>
<feature type="lipid moiety-binding region" description="GPI-anchor amidated aspartate" evidence="5">
    <location>
        <position position="466"/>
    </location>
</feature>
<feature type="disulfide bond" evidence="2">
    <location>
        <begin position="61"/>
        <end position="124"/>
    </location>
</feature>
<feature type="disulfide bond" evidence="2">
    <location>
        <begin position="271"/>
        <end position="327"/>
    </location>
</feature>
<feature type="mutagenesis site" description="Reduced axonal localization and increased coelomocyte expression, indicating shedding into the body cavity." evidence="3">
    <location>
        <begin position="465"/>
        <end position="487"/>
    </location>
</feature>
<comment type="function">
    <text evidence="3">Cell surface protein which plays a role in the plasticity of cholinergic synapses at neuromuscular junctions and in the polarity of the mechanosensory neuron ALM, possibly by antagonizing Wnt signaling.</text>
</comment>
<comment type="subcellular location">
    <subcellularLocation>
        <location evidence="3">Cell projection</location>
        <location evidence="3">Axon</location>
    </subcellularLocation>
    <subcellularLocation>
        <location evidence="3">Synapse</location>
    </subcellularLocation>
    <subcellularLocation>
        <location evidence="3">Cell membrane</location>
        <topology evidence="3">Lipid-anchor</topology>
        <topology evidence="3">GPI-anchor</topology>
    </subcellularLocation>
    <text evidence="3">Membrane association is important for synaptic function.</text>
</comment>
<comment type="tissue specificity">
    <text evidence="3">Expressed in the cholinergic motor neurons AS, VA and DA in the ventral nerve cord and in the mechanosensory ALM neurons in the midbody.</text>
</comment>
<comment type="disruption phenotype">
    <text evidence="3">RNAi-mediated knockdown results in hypersensitivity to the acetylcholinesterase inhibitor aldicarb, indicating increased cholinergic transmission in mutant animals.</text>
</comment>
<name>RIG3_CAEEL</name>
<proteinExistence type="evidence at protein level"/>
<evidence type="ECO:0000255" key="1"/>
<evidence type="ECO:0000255" key="2">
    <source>
        <dbReference type="PROSITE-ProRule" id="PRU00114"/>
    </source>
</evidence>
<evidence type="ECO:0000269" key="3">
    <source>
    </source>
</evidence>
<evidence type="ECO:0000305" key="4"/>
<evidence type="ECO:0000305" key="5">
    <source>
    </source>
</evidence>
<evidence type="ECO:0000312" key="6">
    <source>
        <dbReference type="Proteomes" id="UP000001940"/>
    </source>
</evidence>
<evidence type="ECO:0000312" key="7">
    <source>
        <dbReference type="WormBase" id="C53B7.1"/>
    </source>
</evidence>
<accession>Q18806</accession>
<dbReference type="EMBL" id="BX284606">
    <property type="protein sequence ID" value="CCD67885.1"/>
    <property type="molecule type" value="Genomic_DNA"/>
</dbReference>
<dbReference type="PIR" id="T28804">
    <property type="entry name" value="T28804"/>
</dbReference>
<dbReference type="RefSeq" id="NP_509155.1">
    <property type="nucleotide sequence ID" value="NM_076754.5"/>
</dbReference>
<dbReference type="FunCoup" id="Q18806">
    <property type="interactions" value="6"/>
</dbReference>
<dbReference type="STRING" id="6239.C53B7.1.1"/>
<dbReference type="PaxDb" id="6239-C53B7.1"/>
<dbReference type="PeptideAtlas" id="Q18806"/>
<dbReference type="EnsemblMetazoa" id="C53B7.1.1">
    <property type="protein sequence ID" value="C53B7.1.1"/>
    <property type="gene ID" value="WBGene00004370"/>
</dbReference>
<dbReference type="GeneID" id="180958"/>
<dbReference type="KEGG" id="cel:CELE_C53B7.1"/>
<dbReference type="UCSC" id="C53B7.1.2">
    <property type="organism name" value="c. elegans"/>
</dbReference>
<dbReference type="AGR" id="WB:WBGene00004370"/>
<dbReference type="CTD" id="180958"/>
<dbReference type="WormBase" id="C53B7.1">
    <property type="protein sequence ID" value="CE06971"/>
    <property type="gene ID" value="WBGene00004370"/>
    <property type="gene designation" value="rig-3"/>
</dbReference>
<dbReference type="eggNOG" id="KOG3510">
    <property type="taxonomic scope" value="Eukaryota"/>
</dbReference>
<dbReference type="HOGENOM" id="CLU_561681_0_0_1"/>
<dbReference type="InParanoid" id="Q18806"/>
<dbReference type="OMA" id="FRISCIC"/>
<dbReference type="OrthoDB" id="9355041at2759"/>
<dbReference type="PhylomeDB" id="Q18806"/>
<dbReference type="PRO" id="PR:Q18806"/>
<dbReference type="Proteomes" id="UP000001940">
    <property type="component" value="Chromosome X"/>
</dbReference>
<dbReference type="Bgee" id="WBGene00004370">
    <property type="expression patterns" value="Expressed in pharyngeal muscle cell (C elegans) and 3 other cell types or tissues"/>
</dbReference>
<dbReference type="GO" id="GO:0030424">
    <property type="term" value="C:axon"/>
    <property type="evidence" value="ECO:0000314"/>
    <property type="project" value="WormBase"/>
</dbReference>
<dbReference type="GO" id="GO:0005886">
    <property type="term" value="C:plasma membrane"/>
    <property type="evidence" value="ECO:0000318"/>
    <property type="project" value="GO_Central"/>
</dbReference>
<dbReference type="GO" id="GO:0098552">
    <property type="term" value="C:side of membrane"/>
    <property type="evidence" value="ECO:0007669"/>
    <property type="project" value="UniProtKB-KW"/>
</dbReference>
<dbReference type="GO" id="GO:0045202">
    <property type="term" value="C:synapse"/>
    <property type="evidence" value="ECO:0000314"/>
    <property type="project" value="WormBase"/>
</dbReference>
<dbReference type="GO" id="GO:0098632">
    <property type="term" value="F:cell-cell adhesion mediator activity"/>
    <property type="evidence" value="ECO:0000318"/>
    <property type="project" value="GO_Central"/>
</dbReference>
<dbReference type="GO" id="GO:0007411">
    <property type="term" value="P:axon guidance"/>
    <property type="evidence" value="ECO:0000318"/>
    <property type="project" value="GO_Central"/>
</dbReference>
<dbReference type="GO" id="GO:0070593">
    <property type="term" value="P:dendrite self-avoidance"/>
    <property type="evidence" value="ECO:0000318"/>
    <property type="project" value="GO_Central"/>
</dbReference>
<dbReference type="GO" id="GO:0007156">
    <property type="term" value="P:homophilic cell adhesion via plasma membrane adhesion molecules"/>
    <property type="evidence" value="ECO:0000318"/>
    <property type="project" value="GO_Central"/>
</dbReference>
<dbReference type="CDD" id="cd00096">
    <property type="entry name" value="Ig"/>
    <property type="match status" value="1"/>
</dbReference>
<dbReference type="FunFam" id="2.60.40.10:FF:002638">
    <property type="entry name" value="Neuronal immunoglobulin domain-containing protein rig-3"/>
    <property type="match status" value="1"/>
</dbReference>
<dbReference type="FunFam" id="2.60.40.10:FF:002639">
    <property type="entry name" value="Neuronal immunoglobulin domain-containing protein rig-3"/>
    <property type="match status" value="1"/>
</dbReference>
<dbReference type="Gene3D" id="2.60.40.10">
    <property type="entry name" value="Immunoglobulins"/>
    <property type="match status" value="2"/>
</dbReference>
<dbReference type="InterPro" id="IPR050958">
    <property type="entry name" value="Cell_Adh-Cytoskel_Orgn"/>
</dbReference>
<dbReference type="InterPro" id="IPR007110">
    <property type="entry name" value="Ig-like_dom"/>
</dbReference>
<dbReference type="InterPro" id="IPR036179">
    <property type="entry name" value="Ig-like_dom_sf"/>
</dbReference>
<dbReference type="InterPro" id="IPR013783">
    <property type="entry name" value="Ig-like_fold"/>
</dbReference>
<dbReference type="InterPro" id="IPR003599">
    <property type="entry name" value="Ig_sub"/>
</dbReference>
<dbReference type="InterPro" id="IPR013151">
    <property type="entry name" value="Immunoglobulin_dom"/>
</dbReference>
<dbReference type="PANTHER" id="PTHR45080">
    <property type="entry name" value="CONTACTIN 5"/>
    <property type="match status" value="1"/>
</dbReference>
<dbReference type="PANTHER" id="PTHR45080:SF8">
    <property type="entry name" value="IG-LIKE DOMAIN-CONTAINING PROTEIN"/>
    <property type="match status" value="1"/>
</dbReference>
<dbReference type="Pfam" id="PF00047">
    <property type="entry name" value="ig"/>
    <property type="match status" value="1"/>
</dbReference>
<dbReference type="Pfam" id="PF13927">
    <property type="entry name" value="Ig_3"/>
    <property type="match status" value="1"/>
</dbReference>
<dbReference type="SMART" id="SM00409">
    <property type="entry name" value="IG"/>
    <property type="match status" value="2"/>
</dbReference>
<dbReference type="SUPFAM" id="SSF48726">
    <property type="entry name" value="Immunoglobulin"/>
    <property type="match status" value="2"/>
</dbReference>
<dbReference type="PROSITE" id="PS50835">
    <property type="entry name" value="IG_LIKE"/>
    <property type="match status" value="2"/>
</dbReference>
<sequence length="487" mass="54615">MGRLLAKMLFPLAMCLFVSAVSASDSPSSNEANPIVISSEAMDYDTNTITVREGKKLMVSCVFESDEQIHKSDLLWKQANGNNIDGESNPSLFSVILNEKGSKHRKTSLHFSSVHTRDTGLYTCTGRTAGGENFEKTIKLVVLPAIEWNDKDTVKGALLGEPITIDCGVKGPSGKEPMIQMTNGNGEPLDEEIWTIAGNEATIDSLKKEHAELTVSCITIEMHQETSKEEFPVVDRKDVNIEVYTLPEFETEESVQYTVIDNHVRDAIIYCNVTHSFPPVRHYTFYHGDEEIKMSDKFNIFVNVGVSQGAHLKIHNVNENDLGTYKCEANNIKAKSYHTIHLREANAPAEPKVTLIEDKRHSIIWKVESIDRDPDLPMTAVEIRHLRAGTAEASGVSDEDISDAYWKSHSIFMQRNIKDDGIYEINGLRHGHEYVWRFRQINEAGFGDSVVLRAKTLDDHDLEMMDSASDSKFPLALATLFFVCLFI</sequence>
<organism evidence="6">
    <name type="scientific">Caenorhabditis elegans</name>
    <dbReference type="NCBI Taxonomy" id="6239"/>
    <lineage>
        <taxon>Eukaryota</taxon>
        <taxon>Metazoa</taxon>
        <taxon>Ecdysozoa</taxon>
        <taxon>Nematoda</taxon>
        <taxon>Chromadorea</taxon>
        <taxon>Rhabditida</taxon>
        <taxon>Rhabditina</taxon>
        <taxon>Rhabditomorpha</taxon>
        <taxon>Rhabditoidea</taxon>
        <taxon>Rhabditidae</taxon>
        <taxon>Peloderinae</taxon>
        <taxon>Caenorhabditis</taxon>
    </lineage>
</organism>
<gene>
    <name evidence="7" type="primary">rig-3</name>
    <name evidence="7" type="ORF">C53B7.1</name>
</gene>
<protein>
    <recommendedName>
        <fullName evidence="4">Neuronal immunoglobulin domain-containing protein rig-3</fullName>
    </recommendedName>
</protein>
<keyword id="KW-1003">Cell membrane</keyword>
<keyword id="KW-0966">Cell projection</keyword>
<keyword id="KW-1015">Disulfide bond</keyword>
<keyword id="KW-0325">Glycoprotein</keyword>
<keyword id="KW-0336">GPI-anchor</keyword>
<keyword id="KW-0393">Immunoglobulin domain</keyword>
<keyword id="KW-0449">Lipoprotein</keyword>
<keyword id="KW-0472">Membrane</keyword>
<keyword id="KW-1185">Reference proteome</keyword>
<keyword id="KW-0677">Repeat</keyword>
<keyword id="KW-0732">Signal</keyword>
<keyword id="KW-0770">Synapse</keyword>